<protein>
    <recommendedName>
        <fullName evidence="5">Cytoplasmic 60S subunit biogenesis factor ZNF622</fullName>
    </recommendedName>
    <alternativeName>
        <fullName>Zinc finger protein 622</fullName>
    </alternativeName>
    <alternativeName>
        <fullName evidence="4">Zn-finger protein C47</fullName>
    </alternativeName>
</protein>
<organism>
    <name type="scientific">Gallus gallus</name>
    <name type="common">Chicken</name>
    <dbReference type="NCBI Taxonomy" id="9031"/>
    <lineage>
        <taxon>Eukaryota</taxon>
        <taxon>Metazoa</taxon>
        <taxon>Chordata</taxon>
        <taxon>Craniata</taxon>
        <taxon>Vertebrata</taxon>
        <taxon>Euteleostomi</taxon>
        <taxon>Archelosauria</taxon>
        <taxon>Archosauria</taxon>
        <taxon>Dinosauria</taxon>
        <taxon>Saurischia</taxon>
        <taxon>Theropoda</taxon>
        <taxon>Coelurosauria</taxon>
        <taxon>Aves</taxon>
        <taxon>Neognathae</taxon>
        <taxon>Galloanserae</taxon>
        <taxon>Galliformes</taxon>
        <taxon>Phasianidae</taxon>
        <taxon>Phasianinae</taxon>
        <taxon>Gallus</taxon>
    </lineage>
</organism>
<sequence>MATYTCITCRVAFKDADIQRAHYKTDWHRYNLKRKVADMPPVTAENFQERVLAQRAVAEERDKVTATYCTVCSKRFSTFNAYENHLKSKKHLELEKKAVQAVSKKVKILNEKNLEKGLAVESVDKDEMNAAIQQAIRAQPSSSPKKVPLPPSHASSSPVPMESAGLLQSKERTQKPPRLQWFEQQAKKLAKQEAEEEEDSEEGWEEMDSDEDLGSEEEMEGVEEEEEKQAEAESTCAIGAIPVTDCLFCSHHSRTLMKNVAHMTKVHSFFIPDIEYLVDLRGLIKYLGEKIGVGKICIWCNEKGKSFYSTEAVQAHMNDKSHCKLFTDGDAALEFADFYDFRSSYPDHKEGQDMEVPAELPSDRELEYDDDTMELIPPFRCKSWSSFFNEILQAAVWSVKNGGCY</sequence>
<comment type="function">
    <text evidence="1">Pre-60S-associated cytoplasmic factor involved in the cytoplasmic maturation of the 60S subunit.</text>
</comment>
<comment type="subunit">
    <text evidence="1">Homo- and heterodimer. Associates with pre-60S ribosomal particles.</text>
</comment>
<comment type="subcellular location">
    <subcellularLocation>
        <location evidence="1">Cytoplasm</location>
    </subcellularLocation>
    <subcellularLocation>
        <location evidence="1">Nucleus</location>
    </subcellularLocation>
</comment>
<comment type="alternative products">
    <event type="alternative splicing"/>
    <isoform>
        <id>Q90Y35-1</id>
        <name>1</name>
        <name evidence="4">C47L</name>
        <sequence type="displayed"/>
    </isoform>
    <isoform>
        <id>Q90Y35-2</id>
        <name>2</name>
        <name evidence="4">C47S</name>
        <sequence type="described" ref="VSP_010810"/>
    </isoform>
</comment>
<comment type="tissue specificity">
    <molecule>Isoform 1</molecule>
    <text evidence="3">Mainly expressed in the ovary.</text>
</comment>
<comment type="tissue specificity">
    <molecule>Isoform 2</molecule>
    <text evidence="3">Mainly expressed in the testis.</text>
</comment>
<comment type="similarity">
    <text evidence="5">Belongs to the REI1 family.</text>
</comment>
<reference key="1">
    <citation type="journal article" date="2001" name="Biol. Reprod.">
        <title>Gonad-specific expression of two novel chicken complementary DNA isoforms.</title>
        <authorList>
            <person name="Kim H."/>
            <person name="You S."/>
            <person name="Farris J."/>
            <person name="Foster L.K."/>
            <person name="Choi Y.-J."/>
            <person name="Foster D.N."/>
        </authorList>
    </citation>
    <scope>NUCLEOTIDE SEQUENCE [MRNA] (ISOFORMS 1 AND 2)</scope>
    <scope>TISSUE SPECIFICITY</scope>
    <source>
        <tissue>Testis</tissue>
    </source>
</reference>
<accession>Q90Y35</accession>
<accession>Q90Y36</accession>
<keyword id="KW-0025">Alternative splicing</keyword>
<keyword id="KW-0963">Cytoplasm</keyword>
<keyword id="KW-0479">Metal-binding</keyword>
<keyword id="KW-0539">Nucleus</keyword>
<keyword id="KW-1185">Reference proteome</keyword>
<keyword id="KW-0677">Repeat</keyword>
<keyword id="KW-0690">Ribosome biogenesis</keyword>
<keyword id="KW-0862">Zinc</keyword>
<keyword id="KW-0863">Zinc-finger</keyword>
<dbReference type="EMBL" id="AF299386">
    <property type="protein sequence ID" value="AAK97212.1"/>
    <property type="molecule type" value="mRNA"/>
</dbReference>
<dbReference type="EMBL" id="AF299387">
    <property type="protein sequence ID" value="AAK97213.1"/>
    <property type="molecule type" value="mRNA"/>
</dbReference>
<dbReference type="SMR" id="Q90Y35"/>
<dbReference type="FunCoup" id="Q90Y35">
    <property type="interactions" value="1326"/>
</dbReference>
<dbReference type="STRING" id="9031.ENSGALP00000049965"/>
<dbReference type="PaxDb" id="9031-ENSGALP00000036335"/>
<dbReference type="VEuPathDB" id="HostDB:geneid_373921"/>
<dbReference type="eggNOG" id="KOG2785">
    <property type="taxonomic scope" value="Eukaryota"/>
</dbReference>
<dbReference type="InParanoid" id="Q90Y35"/>
<dbReference type="OrthoDB" id="19329at2759"/>
<dbReference type="PhylomeDB" id="Q90Y35"/>
<dbReference type="Proteomes" id="UP000000539">
    <property type="component" value="Unassembled WGS sequence"/>
</dbReference>
<dbReference type="GO" id="GO:0005737">
    <property type="term" value="C:cytoplasm"/>
    <property type="evidence" value="ECO:0007669"/>
    <property type="project" value="UniProtKB-SubCell"/>
</dbReference>
<dbReference type="GO" id="GO:0005634">
    <property type="term" value="C:nucleus"/>
    <property type="evidence" value="ECO:0007669"/>
    <property type="project" value="UniProtKB-SubCell"/>
</dbReference>
<dbReference type="GO" id="GO:0030687">
    <property type="term" value="C:preribosome, large subunit precursor"/>
    <property type="evidence" value="ECO:0000318"/>
    <property type="project" value="GO_Central"/>
</dbReference>
<dbReference type="GO" id="GO:0003676">
    <property type="term" value="F:nucleic acid binding"/>
    <property type="evidence" value="ECO:0007669"/>
    <property type="project" value="InterPro"/>
</dbReference>
<dbReference type="GO" id="GO:1990275">
    <property type="term" value="F:preribosome binding"/>
    <property type="evidence" value="ECO:0000250"/>
    <property type="project" value="UniProtKB"/>
</dbReference>
<dbReference type="GO" id="GO:0008270">
    <property type="term" value="F:zinc ion binding"/>
    <property type="evidence" value="ECO:0007669"/>
    <property type="project" value="UniProtKB-KW"/>
</dbReference>
<dbReference type="GO" id="GO:0042273">
    <property type="term" value="P:ribosomal large subunit biogenesis"/>
    <property type="evidence" value="ECO:0000250"/>
    <property type="project" value="UniProtKB"/>
</dbReference>
<dbReference type="FunFam" id="3.30.160.60:FF:000915">
    <property type="entry name" value="Zinc finger protein 622"/>
    <property type="match status" value="1"/>
</dbReference>
<dbReference type="Gene3D" id="3.30.160.60">
    <property type="entry name" value="Classic Zinc Finger"/>
    <property type="match status" value="1"/>
</dbReference>
<dbReference type="InterPro" id="IPR003604">
    <property type="entry name" value="Matrin/U1-like-C_Znf_C2H2"/>
</dbReference>
<dbReference type="InterPro" id="IPR041661">
    <property type="entry name" value="ZN622/Rei1/Reh1_Znf-C2H2"/>
</dbReference>
<dbReference type="InterPro" id="IPR040025">
    <property type="entry name" value="Znf622/Rei1/Reh1"/>
</dbReference>
<dbReference type="InterPro" id="IPR022755">
    <property type="entry name" value="Znf_C2H2_jaz"/>
</dbReference>
<dbReference type="InterPro" id="IPR036236">
    <property type="entry name" value="Znf_C2H2_sf"/>
</dbReference>
<dbReference type="InterPro" id="IPR013087">
    <property type="entry name" value="Znf_C2H2_type"/>
</dbReference>
<dbReference type="PANTHER" id="PTHR13182:SF8">
    <property type="entry name" value="CYTOPLASMIC 60S SUBUNIT BIOGENESIS FACTOR ZNF622"/>
    <property type="match status" value="1"/>
</dbReference>
<dbReference type="PANTHER" id="PTHR13182">
    <property type="entry name" value="ZINC FINGER PROTEIN 622"/>
    <property type="match status" value="1"/>
</dbReference>
<dbReference type="Pfam" id="PF12756">
    <property type="entry name" value="zf-C2H2_2"/>
    <property type="match status" value="1"/>
</dbReference>
<dbReference type="Pfam" id="PF12171">
    <property type="entry name" value="zf-C2H2_jaz"/>
    <property type="match status" value="1"/>
</dbReference>
<dbReference type="SMART" id="SM00355">
    <property type="entry name" value="ZnF_C2H2"/>
    <property type="match status" value="4"/>
</dbReference>
<dbReference type="SMART" id="SM00451">
    <property type="entry name" value="ZnF_U1"/>
    <property type="match status" value="2"/>
</dbReference>
<dbReference type="SUPFAM" id="SSF57667">
    <property type="entry name" value="beta-beta-alpha zinc fingers"/>
    <property type="match status" value="2"/>
</dbReference>
<evidence type="ECO:0000250" key="1">
    <source>
        <dbReference type="UniProtKB" id="Q969S3"/>
    </source>
</evidence>
<evidence type="ECO:0000256" key="2">
    <source>
        <dbReference type="SAM" id="MobiDB-lite"/>
    </source>
</evidence>
<evidence type="ECO:0000269" key="3">
    <source>
    </source>
</evidence>
<evidence type="ECO:0000303" key="4">
    <source>
    </source>
</evidence>
<evidence type="ECO:0000305" key="5"/>
<gene>
    <name type="primary">ZNF622</name>
</gene>
<proteinExistence type="evidence at transcript level"/>
<name>ZN622_CHICK</name>
<feature type="chain" id="PRO_0000191818" description="Cytoplasmic 60S subunit biogenesis factor ZNF622">
    <location>
        <begin position="1"/>
        <end position="405"/>
    </location>
</feature>
<feature type="zinc finger region" description="U1-type 1">
    <location>
        <begin position="4"/>
        <end position="28"/>
    </location>
</feature>
<feature type="zinc finger region" description="U1-type 2">
    <location>
        <begin position="67"/>
        <end position="91"/>
    </location>
</feature>
<feature type="region of interest" description="Disordered" evidence="2">
    <location>
        <begin position="135"/>
        <end position="230"/>
    </location>
</feature>
<feature type="compositionally biased region" description="Acidic residues" evidence="2">
    <location>
        <begin position="194"/>
        <end position="228"/>
    </location>
</feature>
<feature type="splice variant" id="VSP_010810" description="In isoform 2." evidence="4">
    <original>KLFTDGDAALEFADFYDFRSSYPDHKEGQDMEVPAELPSDRELEYDDDTMELIPPFRCKSWSSFFNEILQAAVWSVKNGGCY</original>
    <variation>NSSQMEMRPWNLQTSMILGAVTLITRKGKTWRCLLSSHPTENWNTMMTPWS</variation>
    <location>
        <begin position="324"/>
        <end position="405"/>
    </location>
</feature>